<evidence type="ECO:0000255" key="1">
    <source>
        <dbReference type="PROSITE-ProRule" id="PRU00434"/>
    </source>
</evidence>
<evidence type="ECO:0000269" key="2">
    <source>
    </source>
</evidence>
<evidence type="ECO:0000269" key="3">
    <source>
    </source>
</evidence>
<evidence type="ECO:0000269" key="4">
    <source>
    </source>
</evidence>
<evidence type="ECO:0000303" key="5">
    <source>
    </source>
</evidence>
<evidence type="ECO:0000305" key="6"/>
<evidence type="ECO:0000305" key="7">
    <source>
    </source>
</evidence>
<evidence type="ECO:0000305" key="8">
    <source>
    </source>
</evidence>
<gene>
    <name evidence="5" type="primary">oppD</name>
    <name type="ordered locus">STM1743</name>
</gene>
<proteinExistence type="evidence at protein level"/>
<accession>P04285</accession>
<comment type="function">
    <text evidence="2 3 4">Part of the ABC transporter complex OppABCDF involved in the uptake of oligopeptides, including the cell wall murein tripeptide L-alanyl-gamma-D-glutamyl-meso-diaminopimelate (PubMed:2821267, PubMed:3301822). Responsible for energy coupling to the transport system (PubMed:3926486). Plays an important nutritional role and is involved in the recycling of cell wall peptides (PubMed:2821267, PubMed:3301822). Binds ATP (PubMed:3926486).</text>
</comment>
<comment type="catalytic activity">
    <reaction evidence="8">
        <text>a [peptide](out) + ATP + H2O = a [peptide](in) + ADP + phosphate + H(+)</text>
        <dbReference type="Rhea" id="RHEA:78459"/>
        <dbReference type="Rhea" id="RHEA-COMP:19083"/>
        <dbReference type="ChEBI" id="CHEBI:15377"/>
        <dbReference type="ChEBI" id="CHEBI:15378"/>
        <dbReference type="ChEBI" id="CHEBI:30616"/>
        <dbReference type="ChEBI" id="CHEBI:33710"/>
        <dbReference type="ChEBI" id="CHEBI:43474"/>
        <dbReference type="ChEBI" id="CHEBI:456216"/>
        <dbReference type="EC" id="7.4.2.6"/>
    </reaction>
    <physiologicalReaction direction="left-to-right" evidence="8">
        <dbReference type="Rhea" id="RHEA:78460"/>
    </physiologicalReaction>
</comment>
<comment type="catalytic activity">
    <reaction evidence="7">
        <text>L-alanyl-gamma-D-glutamyl-meso-2,6-diaminopimelate(out) + ATP + H2O = L-alanyl-gamma-D-glutamyl-meso-2,6-diaminopimelate(in) + ADP + phosphate + H(+)</text>
        <dbReference type="Rhea" id="RHEA:29763"/>
        <dbReference type="ChEBI" id="CHEBI:15377"/>
        <dbReference type="ChEBI" id="CHEBI:15378"/>
        <dbReference type="ChEBI" id="CHEBI:30616"/>
        <dbReference type="ChEBI" id="CHEBI:43474"/>
        <dbReference type="ChEBI" id="CHEBI:61401"/>
        <dbReference type="ChEBI" id="CHEBI:456216"/>
    </reaction>
    <physiologicalReaction direction="left-to-right" evidence="7">
        <dbReference type="Rhea" id="RHEA:29764"/>
    </physiologicalReaction>
</comment>
<comment type="subunit">
    <text evidence="2">The complex is composed of two ATP-binding proteins (OppD and OppF), two transmembrane proteins (OppB and OppC) and a solute-binding protein (OppA).</text>
</comment>
<comment type="subcellular location">
    <subcellularLocation>
        <location evidence="2">Cell inner membrane</location>
        <topology evidence="2">Peripheral membrane protein</topology>
        <orientation evidence="6">Cytoplasmic side</orientation>
    </subcellularLocation>
</comment>
<comment type="induction">
    <text evidence="2">Part of the opp operon, which is constitutively expressed.</text>
</comment>
<comment type="similarity">
    <text evidence="6">Belongs to the ABC transporter superfamily.</text>
</comment>
<feature type="chain" id="PRO_0000092659" description="Oligopeptide transport ATP-binding protein OppD">
    <location>
        <begin position="1"/>
        <end position="335"/>
    </location>
</feature>
<feature type="domain" description="ABC transporter" evidence="1">
    <location>
        <begin position="18"/>
        <end position="267"/>
    </location>
</feature>
<feature type="binding site" evidence="1">
    <location>
        <begin position="54"/>
        <end position="61"/>
    </location>
    <ligand>
        <name>ATP</name>
        <dbReference type="ChEBI" id="CHEBI:30616"/>
    </ligand>
</feature>
<feature type="sequence conflict" description="In Ref. 2; no nucleotide entry." evidence="6" ref="2">
    <original>TAFA</original>
    <variation>SRLR</variation>
    <location>
        <begin position="63"/>
        <end position="66"/>
    </location>
</feature>
<reference key="1">
    <citation type="journal article" date="1987" name="J. Mol. Biol.">
        <title>Molecular characterization of the oligopeptide permease of Salmonella typhimurium.</title>
        <authorList>
            <person name="Hiles I.D."/>
            <person name="Gallagher M.P."/>
            <person name="Jamieson D.J."/>
            <person name="Higgins C.F."/>
        </authorList>
    </citation>
    <scope>NUCLEOTIDE SEQUENCE [GENOMIC DNA]</scope>
    <scope>FUNCTION</scope>
    <scope>SUBUNIT</scope>
    <scope>SUBCELLULAR LOCATION</scope>
    <scope>INDUCTION</scope>
    <source>
        <strain>LT2</strain>
    </source>
</reference>
<reference key="2">
    <citation type="journal article" date="1985" name="EMBO J.">
        <title>Nucleotide binding by membrane components of bacterial periplasmic binding protein-dependent transport systems.</title>
        <authorList>
            <person name="Higgins C.F."/>
            <person name="Hiles I.D."/>
            <person name="Whalley K."/>
            <person name="Jamieson D.J."/>
        </authorList>
    </citation>
    <scope>NUCLEOTIDE SEQUENCE [GENOMIC DNA]</scope>
    <scope>FUNCTION</scope>
</reference>
<reference key="3">
    <citation type="journal article" date="2001" name="Nature">
        <title>Complete genome sequence of Salmonella enterica serovar Typhimurium LT2.</title>
        <authorList>
            <person name="McClelland M."/>
            <person name="Sanderson K.E."/>
            <person name="Spieth J."/>
            <person name="Clifton S.W."/>
            <person name="Latreille P."/>
            <person name="Courtney L."/>
            <person name="Porwollik S."/>
            <person name="Ali J."/>
            <person name="Dante M."/>
            <person name="Du F."/>
            <person name="Hou S."/>
            <person name="Layman D."/>
            <person name="Leonard S."/>
            <person name="Nguyen C."/>
            <person name="Scott K."/>
            <person name="Holmes A."/>
            <person name="Grewal N."/>
            <person name="Mulvaney E."/>
            <person name="Ryan E."/>
            <person name="Sun H."/>
            <person name="Florea L."/>
            <person name="Miller W."/>
            <person name="Stoneking T."/>
            <person name="Nhan M."/>
            <person name="Waterston R."/>
            <person name="Wilson R.K."/>
        </authorList>
    </citation>
    <scope>NUCLEOTIDE SEQUENCE [LARGE SCALE GENOMIC DNA]</scope>
    <source>
        <strain>LT2 / SGSC1412 / ATCC 700720</strain>
    </source>
</reference>
<reference key="4">
    <citation type="journal article" date="1987" name="J. Bacteriol.">
        <title>Uptake of cell wall peptides by Salmonella typhimurium and Escherichia coli.</title>
        <authorList>
            <person name="Goodell E.W."/>
            <person name="Higgins C.F."/>
        </authorList>
    </citation>
    <scope>FUNCTION</scope>
    <source>
        <strain>LT2</strain>
    </source>
</reference>
<sequence>MSLSETATQAPQPANVLLEVNDLRVTFATPDGDVTAVNDLNFTLRAGETLGIVGESGSGKSQTAFALMGLLATNGRIGGSATFNGREILNLPERELNTLRAEQISMIFQDPMTSLNPYMRVGEQLMEVLMLHKGMSKAEAFEESVRMLDAVKMPEARKRMKMYPHEFSGGMRQRVMIAMALLCRPKLLIADEPTTALDVTVQAQIMTLLNELKREFNTAIIMITHDLGVVAGICDKVLVMYAGRTMEYGKARDVFYQPVHPYSIGLLNAVPRLDSEGAEMLTIPGNPPNLLRLPKGCPFQPRCPHAMEICNNAPPLEAFSPGRLRACFKPVEELL</sequence>
<dbReference type="EC" id="7.4.2.6" evidence="7 8"/>
<dbReference type="EMBL" id="X05491">
    <property type="protein sequence ID" value="CAA29042.1"/>
    <property type="molecule type" value="Genomic_DNA"/>
</dbReference>
<dbReference type="EMBL" id="AE006468">
    <property type="protein sequence ID" value="AAL20661.1"/>
    <property type="molecule type" value="Genomic_DNA"/>
</dbReference>
<dbReference type="PIR" id="A03413">
    <property type="entry name" value="QREBOT"/>
</dbReference>
<dbReference type="RefSeq" id="NP_460702.1">
    <property type="nucleotide sequence ID" value="NC_003197.2"/>
</dbReference>
<dbReference type="RefSeq" id="WP_000058857.1">
    <property type="nucleotide sequence ID" value="NC_003197.2"/>
</dbReference>
<dbReference type="SMR" id="P04285"/>
<dbReference type="STRING" id="99287.STM1743"/>
<dbReference type="TCDB" id="3.A.1.5.1">
    <property type="family name" value="the atp-binding cassette (abc) superfamily"/>
</dbReference>
<dbReference type="PaxDb" id="99287-STM1743"/>
<dbReference type="GeneID" id="1253262"/>
<dbReference type="KEGG" id="stm:STM1743"/>
<dbReference type="PATRIC" id="fig|99287.12.peg.1840"/>
<dbReference type="HOGENOM" id="CLU_000604_1_23_6"/>
<dbReference type="OMA" id="CPYADVP"/>
<dbReference type="PhylomeDB" id="P04285"/>
<dbReference type="BioCyc" id="SENT99287:STM1743-MONOMER"/>
<dbReference type="Proteomes" id="UP000001014">
    <property type="component" value="Chromosome"/>
</dbReference>
<dbReference type="GO" id="GO:0005886">
    <property type="term" value="C:plasma membrane"/>
    <property type="evidence" value="ECO:0007669"/>
    <property type="project" value="UniProtKB-SubCell"/>
</dbReference>
<dbReference type="GO" id="GO:0005524">
    <property type="term" value="F:ATP binding"/>
    <property type="evidence" value="ECO:0007669"/>
    <property type="project" value="UniProtKB-KW"/>
</dbReference>
<dbReference type="GO" id="GO:0016887">
    <property type="term" value="F:ATP hydrolysis activity"/>
    <property type="evidence" value="ECO:0007669"/>
    <property type="project" value="InterPro"/>
</dbReference>
<dbReference type="GO" id="GO:0015833">
    <property type="term" value="P:peptide transport"/>
    <property type="evidence" value="ECO:0007669"/>
    <property type="project" value="UniProtKB-KW"/>
</dbReference>
<dbReference type="GO" id="GO:0015031">
    <property type="term" value="P:protein transport"/>
    <property type="evidence" value="ECO:0007669"/>
    <property type="project" value="UniProtKB-KW"/>
</dbReference>
<dbReference type="CDD" id="cd03257">
    <property type="entry name" value="ABC_NikE_OppD_transporters"/>
    <property type="match status" value="1"/>
</dbReference>
<dbReference type="FunFam" id="3.40.50.300:FF:000016">
    <property type="entry name" value="Oligopeptide ABC transporter ATP-binding component"/>
    <property type="match status" value="1"/>
</dbReference>
<dbReference type="Gene3D" id="3.40.50.300">
    <property type="entry name" value="P-loop containing nucleotide triphosphate hydrolases"/>
    <property type="match status" value="1"/>
</dbReference>
<dbReference type="InterPro" id="IPR003593">
    <property type="entry name" value="AAA+_ATPase"/>
</dbReference>
<dbReference type="InterPro" id="IPR050388">
    <property type="entry name" value="ABC_Ni/Peptide_Import"/>
</dbReference>
<dbReference type="InterPro" id="IPR003439">
    <property type="entry name" value="ABC_transporter-like_ATP-bd"/>
</dbReference>
<dbReference type="InterPro" id="IPR017871">
    <property type="entry name" value="ABC_transporter-like_CS"/>
</dbReference>
<dbReference type="InterPro" id="IPR013563">
    <property type="entry name" value="Oligopep_ABC_C"/>
</dbReference>
<dbReference type="InterPro" id="IPR027417">
    <property type="entry name" value="P-loop_NTPase"/>
</dbReference>
<dbReference type="NCBIfam" id="TIGR01727">
    <property type="entry name" value="oligo_HPY"/>
    <property type="match status" value="1"/>
</dbReference>
<dbReference type="NCBIfam" id="NF007010">
    <property type="entry name" value="PRK09473.1"/>
    <property type="match status" value="1"/>
</dbReference>
<dbReference type="PANTHER" id="PTHR43297:SF7">
    <property type="entry name" value="D,D-DIPEPTIDE TRANSPORT ATP-BINDING PROTEIN DDPD-RELATED"/>
    <property type="match status" value="1"/>
</dbReference>
<dbReference type="PANTHER" id="PTHR43297">
    <property type="entry name" value="OLIGOPEPTIDE TRANSPORT ATP-BINDING PROTEIN APPD"/>
    <property type="match status" value="1"/>
</dbReference>
<dbReference type="Pfam" id="PF00005">
    <property type="entry name" value="ABC_tran"/>
    <property type="match status" value="1"/>
</dbReference>
<dbReference type="Pfam" id="PF08352">
    <property type="entry name" value="oligo_HPY"/>
    <property type="match status" value="1"/>
</dbReference>
<dbReference type="SMART" id="SM00382">
    <property type="entry name" value="AAA"/>
    <property type="match status" value="1"/>
</dbReference>
<dbReference type="SUPFAM" id="SSF52540">
    <property type="entry name" value="P-loop containing nucleoside triphosphate hydrolases"/>
    <property type="match status" value="1"/>
</dbReference>
<dbReference type="PROSITE" id="PS00211">
    <property type="entry name" value="ABC_TRANSPORTER_1"/>
    <property type="match status" value="1"/>
</dbReference>
<dbReference type="PROSITE" id="PS50893">
    <property type="entry name" value="ABC_TRANSPORTER_2"/>
    <property type="match status" value="1"/>
</dbReference>
<name>OPPD_SALTY</name>
<organism>
    <name type="scientific">Salmonella typhimurium (strain LT2 / SGSC1412 / ATCC 700720)</name>
    <dbReference type="NCBI Taxonomy" id="99287"/>
    <lineage>
        <taxon>Bacteria</taxon>
        <taxon>Pseudomonadati</taxon>
        <taxon>Pseudomonadota</taxon>
        <taxon>Gammaproteobacteria</taxon>
        <taxon>Enterobacterales</taxon>
        <taxon>Enterobacteriaceae</taxon>
        <taxon>Salmonella</taxon>
    </lineage>
</organism>
<protein>
    <recommendedName>
        <fullName evidence="6">Oligopeptide transport ATP-binding protein OppD</fullName>
        <ecNumber evidence="7 8">7.4.2.6</ecNumber>
    </recommendedName>
</protein>
<keyword id="KW-0067">ATP-binding</keyword>
<keyword id="KW-0997">Cell inner membrane</keyword>
<keyword id="KW-1003">Cell membrane</keyword>
<keyword id="KW-0472">Membrane</keyword>
<keyword id="KW-0547">Nucleotide-binding</keyword>
<keyword id="KW-0571">Peptide transport</keyword>
<keyword id="KW-0653">Protein transport</keyword>
<keyword id="KW-1185">Reference proteome</keyword>
<keyword id="KW-1278">Translocase</keyword>
<keyword id="KW-0813">Transport</keyword>